<dbReference type="EMBL" id="M73748">
    <property type="protein sequence ID" value="AAA39866.1"/>
    <property type="molecule type" value="mRNA"/>
</dbReference>
<dbReference type="EMBL" id="M96645">
    <property type="protein sequence ID" value="AAA37724.1"/>
    <property type="molecule type" value="mRNA"/>
</dbReference>
<dbReference type="EMBL" id="AJ250246">
    <property type="protein sequence ID" value="CAB58997.1"/>
    <property type="molecule type" value="mRNA"/>
</dbReference>
<dbReference type="EMBL" id="AJ297944">
    <property type="protein sequence ID" value="CAC16152.1"/>
    <property type="molecule type" value="mRNA"/>
</dbReference>
<dbReference type="EMBL" id="AY115493">
    <property type="protein sequence ID" value="AAM66761.1"/>
    <property type="molecule type" value="Genomic_DNA"/>
</dbReference>
<dbReference type="EMBL" id="AK158855">
    <property type="protein sequence ID" value="BAE34695.1"/>
    <property type="molecule type" value="mRNA"/>
</dbReference>
<dbReference type="EMBL" id="AL611982">
    <property type="status" value="NOT_ANNOTATED_CDS"/>
    <property type="molecule type" value="Genomic_DNA"/>
</dbReference>
<dbReference type="EMBL" id="BC026551">
    <property type="protein sequence ID" value="AAH26551.1"/>
    <property type="molecule type" value="mRNA"/>
</dbReference>
<dbReference type="CCDS" id="CCDS38943.1"/>
<dbReference type="PIR" id="A54560">
    <property type="entry name" value="A54560"/>
</dbReference>
<dbReference type="RefSeq" id="NP_001277751.1">
    <property type="nucleotide sequence ID" value="NM_001290822.1"/>
</dbReference>
<dbReference type="RefSeq" id="NP_034459.2">
    <property type="nucleotide sequence ID" value="NM_010329.4"/>
</dbReference>
<dbReference type="PDB" id="3IET">
    <property type="method" value="X-ray"/>
    <property type="resolution" value="2.20 A"/>
    <property type="chains" value="Q/X=76-84"/>
</dbReference>
<dbReference type="PDB" id="6LZ4">
    <property type="method" value="X-ray"/>
    <property type="resolution" value="2.49 A"/>
    <property type="chains" value="C/F=38-51"/>
</dbReference>
<dbReference type="PDBsum" id="3IET"/>
<dbReference type="PDBsum" id="6LZ4"/>
<dbReference type="SMR" id="Q62011"/>
<dbReference type="FunCoup" id="Q62011">
    <property type="interactions" value="53"/>
</dbReference>
<dbReference type="IntAct" id="Q62011">
    <property type="interactions" value="1"/>
</dbReference>
<dbReference type="STRING" id="10090.ENSMUSP00000030317"/>
<dbReference type="GlyCosmos" id="Q62011">
    <property type="glycosylation" value="19 sites, No reported glycans"/>
</dbReference>
<dbReference type="GlyGen" id="Q62011">
    <property type="glycosylation" value="19 sites, 1 N-linked glycan (1 site)"/>
</dbReference>
<dbReference type="iPTMnet" id="Q62011"/>
<dbReference type="PhosphoSitePlus" id="Q62011"/>
<dbReference type="PaxDb" id="10090-ENSMUSP00000030317"/>
<dbReference type="ProteomicsDB" id="288024"/>
<dbReference type="Pumba" id="Q62011"/>
<dbReference type="ABCD" id="Q62011">
    <property type="antibodies" value="17 sequenced antibodies"/>
</dbReference>
<dbReference type="Antibodypedia" id="764">
    <property type="antibodies" value="1356 antibodies from 50 providers"/>
</dbReference>
<dbReference type="DNASU" id="14726"/>
<dbReference type="Ensembl" id="ENSMUST00000030317.14">
    <property type="protein sequence ID" value="ENSMUSP00000030317.8"/>
    <property type="gene ID" value="ENSMUSG00000028583.15"/>
</dbReference>
<dbReference type="GeneID" id="14726"/>
<dbReference type="KEGG" id="mmu:14726"/>
<dbReference type="UCSC" id="uc008vqa.2">
    <property type="organism name" value="mouse"/>
</dbReference>
<dbReference type="AGR" id="MGI:103098"/>
<dbReference type="CTD" id="10630"/>
<dbReference type="MGI" id="MGI:103098">
    <property type="gene designation" value="Pdpn"/>
</dbReference>
<dbReference type="VEuPathDB" id="HostDB:ENSMUSG00000028583"/>
<dbReference type="eggNOG" id="ENOG502QRWU">
    <property type="taxonomic scope" value="Eukaryota"/>
</dbReference>
<dbReference type="GeneTree" id="ENSGT00390000000013"/>
<dbReference type="InParanoid" id="Q62011"/>
<dbReference type="OMA" id="SAWLWIP"/>
<dbReference type="OrthoDB" id="9633724at2759"/>
<dbReference type="PhylomeDB" id="Q62011"/>
<dbReference type="TreeFam" id="TF337068"/>
<dbReference type="Reactome" id="R-MMU-114604">
    <property type="pathway name" value="GPVI-mediated activation cascade"/>
</dbReference>
<dbReference type="BioGRID-ORCS" id="14726">
    <property type="hits" value="0 hits in 79 CRISPR screens"/>
</dbReference>
<dbReference type="ChiTaRS" id="Pdpn">
    <property type="organism name" value="mouse"/>
</dbReference>
<dbReference type="EvolutionaryTrace" id="Q62011"/>
<dbReference type="PRO" id="PR:Q62011"/>
<dbReference type="Proteomes" id="UP000000589">
    <property type="component" value="Chromosome 4"/>
</dbReference>
<dbReference type="RNAct" id="Q62011">
    <property type="molecule type" value="protein"/>
</dbReference>
<dbReference type="Bgee" id="ENSMUSG00000028583">
    <property type="expression patterns" value="Expressed in yolk sac and 86 other cell types or tissues"/>
</dbReference>
<dbReference type="ExpressionAtlas" id="Q62011">
    <property type="expression patterns" value="baseline and differential"/>
</dbReference>
<dbReference type="GO" id="GO:0070161">
    <property type="term" value="C:anchoring junction"/>
    <property type="evidence" value="ECO:0007669"/>
    <property type="project" value="UniProtKB-KW"/>
</dbReference>
<dbReference type="GO" id="GO:0016324">
    <property type="term" value="C:apical plasma membrane"/>
    <property type="evidence" value="ECO:0000250"/>
    <property type="project" value="UniProtKB"/>
</dbReference>
<dbReference type="GO" id="GO:0016323">
    <property type="term" value="C:basolateral plasma membrane"/>
    <property type="evidence" value="ECO:0000250"/>
    <property type="project" value="UniProtKB"/>
</dbReference>
<dbReference type="GO" id="GO:0031410">
    <property type="term" value="C:cytoplasmic vesicle"/>
    <property type="evidence" value="ECO:0000250"/>
    <property type="project" value="UniProtKB"/>
</dbReference>
<dbReference type="GO" id="GO:0005829">
    <property type="term" value="C:cytosol"/>
    <property type="evidence" value="ECO:0000250"/>
    <property type="project" value="UniProtKB"/>
</dbReference>
<dbReference type="GO" id="GO:0009897">
    <property type="term" value="C:external side of plasma membrane"/>
    <property type="evidence" value="ECO:0000314"/>
    <property type="project" value="MGI"/>
</dbReference>
<dbReference type="GO" id="GO:0030175">
    <property type="term" value="C:filopodium"/>
    <property type="evidence" value="ECO:0000314"/>
    <property type="project" value="UniProtKB"/>
</dbReference>
<dbReference type="GO" id="GO:0031527">
    <property type="term" value="C:filopodium membrane"/>
    <property type="evidence" value="ECO:0000250"/>
    <property type="project" value="UniProtKB"/>
</dbReference>
<dbReference type="GO" id="GO:0030027">
    <property type="term" value="C:lamellipodium"/>
    <property type="evidence" value="ECO:0000314"/>
    <property type="project" value="UniProtKB"/>
</dbReference>
<dbReference type="GO" id="GO:0031258">
    <property type="term" value="C:lamellipodium membrane"/>
    <property type="evidence" value="ECO:0000250"/>
    <property type="project" value="UniProtKB"/>
</dbReference>
<dbReference type="GO" id="GO:0061851">
    <property type="term" value="C:leading edge of lamellipodium"/>
    <property type="evidence" value="ECO:0000250"/>
    <property type="project" value="UniProtKB"/>
</dbReference>
<dbReference type="GO" id="GO:0045121">
    <property type="term" value="C:membrane raft"/>
    <property type="evidence" value="ECO:0000250"/>
    <property type="project" value="UniProtKB"/>
</dbReference>
<dbReference type="GO" id="GO:0031528">
    <property type="term" value="C:microvillus membrane"/>
    <property type="evidence" value="ECO:0000250"/>
    <property type="project" value="UniProtKB"/>
</dbReference>
<dbReference type="GO" id="GO:0005886">
    <property type="term" value="C:plasma membrane"/>
    <property type="evidence" value="ECO:0000314"/>
    <property type="project" value="UniProtKB"/>
</dbReference>
<dbReference type="GO" id="GO:0001726">
    <property type="term" value="C:ruffle"/>
    <property type="evidence" value="ECO:0000314"/>
    <property type="project" value="UniProtKB"/>
</dbReference>
<dbReference type="GO" id="GO:0032587">
    <property type="term" value="C:ruffle membrane"/>
    <property type="evidence" value="ECO:0000250"/>
    <property type="project" value="UniProtKB"/>
</dbReference>
<dbReference type="GO" id="GO:0097197">
    <property type="term" value="C:tetraspanin-enriched microdomain"/>
    <property type="evidence" value="ECO:0000250"/>
    <property type="project" value="UniProtKB"/>
</dbReference>
<dbReference type="GO" id="GO:0005102">
    <property type="term" value="F:signaling receptor binding"/>
    <property type="evidence" value="ECO:0000250"/>
    <property type="project" value="UniProtKB"/>
</dbReference>
<dbReference type="GO" id="GO:0070252">
    <property type="term" value="P:actin-mediated cell contraction"/>
    <property type="evidence" value="ECO:0000314"/>
    <property type="project" value="UniProtKB"/>
</dbReference>
<dbReference type="GO" id="GO:0007155">
    <property type="term" value="P:cell adhesion"/>
    <property type="evidence" value="ECO:0000266"/>
    <property type="project" value="MGI"/>
</dbReference>
<dbReference type="GO" id="GO:0016477">
    <property type="term" value="P:cell migration"/>
    <property type="evidence" value="ECO:0000315"/>
    <property type="project" value="UniProtKB"/>
</dbReference>
<dbReference type="GO" id="GO:0008283">
    <property type="term" value="P:cell population proliferation"/>
    <property type="evidence" value="ECO:0000315"/>
    <property type="project" value="MGI"/>
</dbReference>
<dbReference type="GO" id="GO:0098609">
    <property type="term" value="P:cell-cell adhesion"/>
    <property type="evidence" value="ECO:0000315"/>
    <property type="project" value="MGI"/>
</dbReference>
<dbReference type="GO" id="GO:0048286">
    <property type="term" value="P:lung alveolus development"/>
    <property type="evidence" value="ECO:0000315"/>
    <property type="project" value="MGI"/>
</dbReference>
<dbReference type="GO" id="GO:0030324">
    <property type="term" value="P:lung development"/>
    <property type="evidence" value="ECO:0000315"/>
    <property type="project" value="MGI"/>
</dbReference>
<dbReference type="GO" id="GO:0048535">
    <property type="term" value="P:lymph node development"/>
    <property type="evidence" value="ECO:0000315"/>
    <property type="project" value="UniProtKB"/>
</dbReference>
<dbReference type="GO" id="GO:0001946">
    <property type="term" value="P:lymphangiogenesis"/>
    <property type="evidence" value="ECO:0000315"/>
    <property type="project" value="MGI"/>
</dbReference>
<dbReference type="GO" id="GO:0060838">
    <property type="term" value="P:lymphatic endothelial cell fate commitment"/>
    <property type="evidence" value="ECO:0000315"/>
    <property type="project" value="UniProtKB"/>
</dbReference>
<dbReference type="GO" id="GO:0043066">
    <property type="term" value="P:negative regulation of apoptotic process"/>
    <property type="evidence" value="ECO:0000315"/>
    <property type="project" value="UniProtKB"/>
</dbReference>
<dbReference type="GO" id="GO:0008285">
    <property type="term" value="P:negative regulation of cell population proliferation"/>
    <property type="evidence" value="ECO:0000315"/>
    <property type="project" value="UniProtKB"/>
</dbReference>
<dbReference type="GO" id="GO:0030335">
    <property type="term" value="P:positive regulation of cell migration"/>
    <property type="evidence" value="ECO:0000250"/>
    <property type="project" value="UniProtKB"/>
</dbReference>
<dbReference type="GO" id="GO:2000147">
    <property type="term" value="P:positive regulation of cell motility"/>
    <property type="evidence" value="ECO:0000315"/>
    <property type="project" value="MGI"/>
</dbReference>
<dbReference type="GO" id="GO:0010718">
    <property type="term" value="P:positive regulation of epithelial to mesenchymal transition"/>
    <property type="evidence" value="ECO:0000250"/>
    <property type="project" value="UniProtKB"/>
</dbReference>
<dbReference type="GO" id="GO:0090091">
    <property type="term" value="P:positive regulation of extracellular matrix disassembly"/>
    <property type="evidence" value="ECO:0000250"/>
    <property type="project" value="UniProtKB"/>
</dbReference>
<dbReference type="GO" id="GO:1901731">
    <property type="term" value="P:positive regulation of platelet aggregation"/>
    <property type="evidence" value="ECO:0000314"/>
    <property type="project" value="UniProtKB"/>
</dbReference>
<dbReference type="GO" id="GO:0006693">
    <property type="term" value="P:prostaglandin metabolic process"/>
    <property type="evidence" value="ECO:0000315"/>
    <property type="project" value="MGI"/>
</dbReference>
<dbReference type="GO" id="GO:0030155">
    <property type="term" value="P:regulation of cell adhesion"/>
    <property type="evidence" value="ECO:0000315"/>
    <property type="project" value="UniProtKB"/>
</dbReference>
<dbReference type="GO" id="GO:0008360">
    <property type="term" value="P:regulation of cell shape"/>
    <property type="evidence" value="ECO:0007669"/>
    <property type="project" value="UniProtKB-KW"/>
</dbReference>
<dbReference type="GO" id="GO:2000045">
    <property type="term" value="P:regulation of G1/S transition of mitotic cell cycle"/>
    <property type="evidence" value="ECO:0000315"/>
    <property type="project" value="MGI"/>
</dbReference>
<dbReference type="GO" id="GO:2000392">
    <property type="term" value="P:regulation of lamellipodium morphogenesis"/>
    <property type="evidence" value="ECO:0000250"/>
    <property type="project" value="UniProtKB"/>
</dbReference>
<dbReference type="GO" id="GO:1904328">
    <property type="term" value="P:regulation of myofibroblast contraction"/>
    <property type="evidence" value="ECO:0000315"/>
    <property type="project" value="UniProtKB"/>
</dbReference>
<dbReference type="GO" id="GO:1900024">
    <property type="term" value="P:regulation of substrate adhesion-dependent cell spreading"/>
    <property type="evidence" value="ECO:0000315"/>
    <property type="project" value="UniProtKB"/>
</dbReference>
<dbReference type="GO" id="GO:0007266">
    <property type="term" value="P:Rho protein signal transduction"/>
    <property type="evidence" value="ECO:0000250"/>
    <property type="project" value="UniProtKB"/>
</dbReference>
<dbReference type="GO" id="GO:0007165">
    <property type="term" value="P:signal transduction"/>
    <property type="evidence" value="ECO:0000315"/>
    <property type="project" value="MGI"/>
</dbReference>
<dbReference type="GO" id="GO:0035239">
    <property type="term" value="P:tube morphogenesis"/>
    <property type="evidence" value="ECO:0000266"/>
    <property type="project" value="MGI"/>
</dbReference>
<dbReference type="GO" id="GO:0061032">
    <property type="term" value="P:visceral serous pericardium development"/>
    <property type="evidence" value="ECO:0000304"/>
    <property type="project" value="DFLAT"/>
</dbReference>
<dbReference type="GO" id="GO:0044319">
    <property type="term" value="P:wound healing, spreading of cells"/>
    <property type="evidence" value="ECO:0000250"/>
    <property type="project" value="UniProtKB"/>
</dbReference>
<dbReference type="InterPro" id="IPR052684">
    <property type="entry name" value="Podoplanin_domain"/>
</dbReference>
<dbReference type="PANTHER" id="PTHR47390">
    <property type="entry name" value="PODOPLANIN"/>
    <property type="match status" value="1"/>
</dbReference>
<dbReference type="PANTHER" id="PTHR47390:SF1">
    <property type="entry name" value="PODOPLANIN"/>
    <property type="match status" value="1"/>
</dbReference>
<dbReference type="Pfam" id="PF05808">
    <property type="entry name" value="Podoplanin"/>
    <property type="match status" value="1"/>
</dbReference>
<sequence>MWTVPVLFWVLGSVWFWDSAQGGTIGVNEDDIVTPGTGDGMVPPGIEDKITTTGATGGLNESTGKAPLVPTQRERGTKPPLEELSTSATSDHDHREHESTTTVKVVTSHSVDKKTSHPNRDNAGDETQTTDKKDGLPVVTLVGIIVGVLLAIGFVGGIFIVVMKKISGRFSP</sequence>
<gene>
    <name evidence="21" type="primary">Pdpn</name>
    <name evidence="17" type="synonym">Gp38</name>
    <name type="synonym">Ots8</name>
</gene>
<feature type="signal peptide" evidence="2">
    <location>
        <begin position="1"/>
        <end position="22"/>
    </location>
</feature>
<feature type="chain" id="PRO_0000021352" description="Podoplanin">
    <location>
        <begin position="23"/>
        <end position="172"/>
    </location>
</feature>
<feature type="topological domain" description="Extracellular" evidence="3">
    <location>
        <begin position="23"/>
        <end position="141"/>
    </location>
</feature>
<feature type="transmembrane region" description="Helical" evidence="3">
    <location>
        <begin position="142"/>
        <end position="162"/>
    </location>
</feature>
<feature type="topological domain" description="Cytoplasmic">
    <location>
        <begin position="163"/>
        <end position="172"/>
    </location>
</feature>
<feature type="region of interest" description="Disordered" evidence="4">
    <location>
        <begin position="49"/>
        <end position="132"/>
    </location>
</feature>
<feature type="region of interest" description="Requires for dimerization and lipidd rafts association" evidence="2">
    <location>
        <begin position="143"/>
        <end position="147"/>
    </location>
</feature>
<feature type="region of interest" description="Requires for interaction with MSN and EZR" evidence="2">
    <location>
        <begin position="164"/>
        <end position="165"/>
    </location>
</feature>
<feature type="compositionally biased region" description="Polar residues" evidence="4">
    <location>
        <begin position="51"/>
        <end position="63"/>
    </location>
</feature>
<feature type="compositionally biased region" description="Basic and acidic residues" evidence="4">
    <location>
        <begin position="72"/>
        <end position="81"/>
    </location>
</feature>
<feature type="compositionally biased region" description="Basic and acidic residues" evidence="4">
    <location>
        <begin position="90"/>
        <end position="99"/>
    </location>
</feature>
<feature type="compositionally biased region" description="Low complexity" evidence="4">
    <location>
        <begin position="100"/>
        <end position="109"/>
    </location>
</feature>
<feature type="compositionally biased region" description="Basic and acidic residues" evidence="4">
    <location>
        <begin position="110"/>
        <end position="132"/>
    </location>
</feature>
<feature type="glycosylation site" description="O-linked (GalNAc...) threonine" evidence="3">
    <location>
        <position position="37"/>
    </location>
</feature>
<feature type="glycosylation site" description="O-linked (GalNAc...) threonine" evidence="3">
    <location>
        <position position="51"/>
    </location>
</feature>
<feature type="glycosylation site" description="O-linked (GalNAc...) threonine" evidence="2">
    <location>
        <position position="52"/>
    </location>
</feature>
<feature type="glycosylation site" description="O-linked (GalNAc...) threonine" evidence="3">
    <location>
        <position position="53"/>
    </location>
</feature>
<feature type="glycosylation site" description="O-linked (GalNAc...) threonine" evidence="3">
    <location>
        <position position="56"/>
    </location>
</feature>
<feature type="glycosylation site" description="N-linked (GlcNAc...) asparagine" evidence="3">
    <location>
        <position position="60"/>
    </location>
</feature>
<feature type="glycosylation site" description="O-linked (GalNAc...) threonine" evidence="3">
    <location>
        <position position="63"/>
    </location>
</feature>
<feature type="glycosylation site" description="O-linked (GalNAc...) threonine" evidence="3">
    <location>
        <position position="71"/>
    </location>
</feature>
<feature type="glycosylation site" description="O-linked (GalNAc...) threonine" evidence="3">
    <location>
        <position position="77"/>
    </location>
</feature>
<feature type="glycosylation site" description="O-linked (GalNAc...) serine" evidence="3">
    <location>
        <position position="85"/>
    </location>
</feature>
<feature type="glycosylation site" description="O-linked (GalNAc...) threonine" evidence="3">
    <location>
        <position position="86"/>
    </location>
</feature>
<feature type="glycosylation site" description="O-linked (GalNAc...) serine" evidence="3">
    <location>
        <position position="87"/>
    </location>
</feature>
<feature type="glycosylation site" description="O-linked (GalNAc...) threonine" evidence="3">
    <location>
        <position position="89"/>
    </location>
</feature>
<feature type="glycosylation site" description="O-linked (GalNAc...) serine" evidence="3">
    <location>
        <position position="90"/>
    </location>
</feature>
<feature type="glycosylation site" description="O-linked (GalNAc...) threonine" evidence="3">
    <location>
        <position position="100"/>
    </location>
</feature>
<feature type="glycosylation site" description="O-linked (GalNAc...) threonine" evidence="3">
    <location>
        <position position="101"/>
    </location>
</feature>
<feature type="glycosylation site" description="O-linked (GalNAc...) threonine" evidence="3">
    <location>
        <position position="102"/>
    </location>
</feature>
<feature type="glycosylation site" description="O-linked (GalNAc...) threonine" evidence="3">
    <location>
        <position position="107"/>
    </location>
</feature>
<feature type="glycosylation site" description="O-linked (GalNAc...) threonine" evidence="3">
    <location>
        <position position="115"/>
    </location>
</feature>
<feature type="mutagenesis site" description="Eliminates platelet aggregation activity." evidence="8">
    <original>T</original>
    <variation>A</variation>
    <location>
        <position position="34"/>
    </location>
</feature>
<feature type="mutagenesis site" description="50% decrease of cell growth; when associated with A-171. 50% increase of cell migration; when associated with A-171." evidence="13">
    <original>S</original>
    <variation>A</variation>
    <location>
        <position position="167"/>
    </location>
</feature>
<feature type="mutagenesis site" description="Does not significantly increase cell motility; when associated with D-171. Does not significantly decrease cell growth; when associated with A-171." evidence="13">
    <original>S</original>
    <variation>D</variation>
    <location>
        <position position="167"/>
    </location>
</feature>
<feature type="mutagenesis site" description="50% decrease of cell growth; when associated with A-167. 50% increase of cell migration; when associated with A-167." evidence="13">
    <original>S</original>
    <variation>A</variation>
    <location>
        <position position="171"/>
    </location>
</feature>
<feature type="mutagenesis site" description="Does not significantly increase cell motility; when associated with D-171. Does not significantly decrease cell growth; when associated with A-171." evidence="13">
    <original>S</original>
    <variation>D</variation>
    <location>
        <position position="171"/>
    </location>
</feature>
<feature type="sequence conflict" description="In Ref. 2; AAA37724." evidence="20" ref="2">
    <original>EDD</original>
    <variation>KNN</variation>
    <location>
        <begin position="29"/>
        <end position="31"/>
    </location>
</feature>
<feature type="sequence conflict" description="In Ref. 2; AAA37724." evidence="20" ref="2">
    <original>GD</original>
    <variation>EN</variation>
    <location>
        <begin position="38"/>
        <end position="39"/>
    </location>
</feature>
<feature type="sequence conflict" description="In Ref. 1; AAA39866." evidence="20" ref="1">
    <original>FSP</original>
    <variation>SRPKELNRTGCSPNTSENKRASNLPCSPSSSCGGR</variation>
    <location>
        <begin position="170"/>
        <end position="172"/>
    </location>
</feature>
<feature type="helix" evidence="22">
    <location>
        <begin position="81"/>
        <end position="83"/>
    </location>
</feature>
<accession>Q62011</accession>
<accession>A2A8J3</accession>
<accession>Q546R8</accession>
<accession>Q61612</accession>
<protein>
    <recommendedName>
        <fullName evidence="2">Podoplanin</fullName>
    </recommendedName>
    <alternativeName>
        <fullName evidence="17">Glycoprotein 38</fullName>
        <shortName evidence="17">Gp38</shortName>
    </alternativeName>
    <alternativeName>
        <fullName evidence="18">OTS-8</fullName>
    </alternativeName>
    <alternativeName>
        <fullName evidence="16">PA2.26 antigen</fullName>
    </alternativeName>
    <alternativeName>
        <fullName evidence="19">Transmembrane glycoprotein E11</fullName>
        <shortName evidence="19">E11</shortName>
    </alternativeName>
</protein>
<proteinExistence type="evidence at protein level"/>
<organism>
    <name type="scientific">Mus musculus</name>
    <name type="common">Mouse</name>
    <dbReference type="NCBI Taxonomy" id="10090"/>
    <lineage>
        <taxon>Eukaryota</taxon>
        <taxon>Metazoa</taxon>
        <taxon>Chordata</taxon>
        <taxon>Craniata</taxon>
        <taxon>Vertebrata</taxon>
        <taxon>Euteleostomi</taxon>
        <taxon>Mammalia</taxon>
        <taxon>Eutheria</taxon>
        <taxon>Euarchontoglires</taxon>
        <taxon>Glires</taxon>
        <taxon>Rodentia</taxon>
        <taxon>Myomorpha</taxon>
        <taxon>Muroidea</taxon>
        <taxon>Muridae</taxon>
        <taxon>Murinae</taxon>
        <taxon>Mus</taxon>
        <taxon>Mus</taxon>
    </lineage>
</organism>
<comment type="function">
    <text evidence="2 5 6 7 8 9 10 11 14">Mediates effects on cell migration and adhesion through its different partners. During development plays a role in blood and lymphatic vessels separation by binding CLEC1B, triggering CLEC1B activation in platelets and leading to platelet activation and/or aggregation (PubMed:14522983, PubMed:15231832, PubMed:17616532, PubMed:20110424). Interaction with CD9, on the contrary, attenuates platelet aggregation and pulmonary metastasis induced by PDPN. Mediates effects on cell migration and adhesion through its different partners. Through MSN or EZR interaction promotes epithelial-mesenchymal transition (EMT) leading to ERZ phosphorylation and triggering RHOA activation leading to cell migration increase and invasiveness. Interaction with CD44 promotes directional cell migration in epithelial and tumor cells (By similarity). In lymph nodes (LNs), controls fibroblastic reticular cells (FRCs) adhesion to the extracellular matrix (ECM) and contraction of the actomyosin by maintaining ERM proteins (EZR; MSN and RDX) and MYL9 activation through association with unknown transmembrane proteins. Engagement of CLEC1B by PDPN promotes FRCs relaxation by blocking lateral membrane interactions leading to reduction of ERM proteins (EZR; MSN and RDX) and MYL9 activation (PubMed:25347465). Through binding with LGALS8 may participate in connection of the lymphatic endothelium to the surrounding extracellular matrix (By similarity). In keratinocytes, induces changes in cell morphology showing an elongated shape, numerous membrane protrusions, major reorganization of the actin cytoskeleton, increased motility and decreased cell adhesion (PubMed:10574709). Controls invadopodia stability and maturation leading to efficient degradation of the extracellular matrix (ECM) in tumor cells through modulation of RHOC activity in order to activate ROCK1/ROCK2 and LIMK1/LIMK2 and inactivation of CFL1 (By similarity). Required for normal lung cell proliferation and alveolus formation at birth (PubMed:12654292). Does not function as a water channel or as a regulator of aquaporin-type water channels (By similarity). Does not have any effect on folic acid or amino acid transport (PubMed:12032185).</text>
</comment>
<comment type="subunit">
    <text evidence="2 10">Homodimer. Interacts with CLEC1B; the interaction is independent of CLEC1B glycosylation and activates CLEC1B; the interaction is dependent of sialic acid on O-glycans (PubMed:17616532). Interacts with CD9; this interaction is homophilic and attenuates platelet aggregation and pulmonary metastasis induced by PDPN. Interacts with LGALS8; the interaction is glycosylation-dependent; may participate in connection of the lymphatic endothelium to the surrounding extracellular matrix. Interacts with HSPA9. Interacts (via extracellular domain) with CD44; this interaction is required for PDPN-mediated directional migration and regulation of lamellipodia extension/stabilization during cell spreading and migration. Interacts (via cytoplasmic domain) with MSN and EZR; activates RHOA and promotes epithelial-mesenchymal transition. Interacts with CCL21; relocalized PDPN to the basolateral membrane (By similarity).</text>
</comment>
<comment type="subcellular location">
    <subcellularLocation>
        <location evidence="5">Membrane</location>
        <topology evidence="3">Single-pass type I membrane protein</topology>
    </subcellularLocation>
    <subcellularLocation>
        <location evidence="5">Cell projection</location>
        <location evidence="5">Lamellipodium membrane</location>
        <topology evidence="5">Single-pass type I membrane protein</topology>
    </subcellularLocation>
    <subcellularLocation>
        <location evidence="5">Cell projection</location>
        <location evidence="5">Filopodium membrane</location>
        <topology evidence="3">Single-pass type I membrane protein</topology>
    </subcellularLocation>
    <subcellularLocation>
        <location evidence="5">Cell projection</location>
        <location evidence="5">Microvillus membrane</location>
        <topology evidence="3">Single-pass type I membrane protein</topology>
    </subcellularLocation>
    <subcellularLocation>
        <location evidence="5">Cell projection</location>
        <location evidence="5">Ruffle membrane</location>
        <topology evidence="3">Single-pass type I membrane protein</topology>
    </subcellularLocation>
    <subcellularLocation>
        <location evidence="2">Membrane raft</location>
    </subcellularLocation>
    <subcellularLocation>
        <location evidence="2">Apical cell membrane</location>
    </subcellularLocation>
    <subcellularLocation>
        <location evidence="2">Basolateral cell membrane</location>
    </subcellularLocation>
    <subcellularLocation>
        <location evidence="2">Cell projection</location>
        <location evidence="2">Invadopodium</location>
    </subcellularLocation>
    <text evidence="2 5">Localized to actin-rich microvilli and plasma membrane projections such as filopodia, lamellipodia and ruffles (PubMed:10574709). Association to the lipid rafts is required for PDPN-induced epithelial to mesenchymal transition (EMT). Colocalizes with CD9 in tetraspanin microdomains. Localized at invadopodium adhesion rings in tumor cell. Association to the lipid rafts is essential for PDPN recruitment to invadopodia and ECM degradation (By similarity).</text>
</comment>
<comment type="tissue specificity">
    <text evidence="5 6 8">Detected at high levels in lung and brain, at lower levels in kidney, stomach, liver, spleen and esophagus, and not detected in skin and small intestine. Expressed in epithelial cells of choroid plexus, ependyma, glomerulus and alveolus, in mesothelial cells and in endothelia of lymphatic vessels. Also expressed in stromal cells of peripheral lymphoid tissue and thymic epithelial cells. Detected in carcinoma cell lines and cultured fibroblasts. Expressed at higher levels in colon carcinomas than in normal colon tissue.</text>
</comment>
<comment type="developmental stage">
    <text evidence="11 15">Expressed in mesenteric lymphatic endothelial cells at 16.5 and 18.5 dpc (at protein level) (PubMed:28179430). At 12.5 dpc and 13.5 dpc is expressed in the endothelial cells of forming lymph sacs (PubMed:20110424).</text>
</comment>
<comment type="induction">
    <text evidence="6 12">Down-regulated by treatment with puromycin aminonucleoside (PubMed:12032185). Up-regulated during progression to highly aggressive tumors and during epithelial-mesenchymal transition (EMT) (PubMed:20962267).</text>
</comment>
<comment type="domain">
    <text evidence="2 14">The cytoplasmic domain controls FRC elongation but is dispensable for contraction (PubMed:25347465). The cytoplasmic domain is essential for recruitment to invadopodia and ECM degradation (By similarity).</text>
</comment>
<comment type="PTM">
    <text evidence="2 5 9">Extensively O-glycosylated. Contains sialic acid residues. O-glycosylation is necessary for platelet aggregation activity. Disialylated at Thr-52; sialic acid is critical for platelet-aggregating activity and for CLEC1B interaction (By similarity).</text>
</comment>
<comment type="PTM">
    <text evidence="13">Phosphorylated by PKA; decreases cell migration.</text>
</comment>
<comment type="PTM">
    <text evidence="1">The N-terminus is blocked.</text>
</comment>
<comment type="disruption phenotype">
    <text evidence="7 11">Mice die at birth of respiratory failure due to a low number of attenuated type I cells, narrow and irregular air spaces, and defective formation of alveolar saccules (PubMed:12654292). Knockout Pdpn mice neonates are smaller, and approximately 55% died during the first postnatal week. However, approximately 20% survived, had normal weights and life spans, and are fertile (PubMed:20110424).</text>
</comment>
<comment type="similarity">
    <text evidence="20">Belongs to the podoplanin family.</text>
</comment>
<keyword id="KW-0002">3D-structure</keyword>
<keyword id="KW-0965">Cell junction</keyword>
<keyword id="KW-1003">Cell membrane</keyword>
<keyword id="KW-0966">Cell projection</keyword>
<keyword id="KW-0133">Cell shape</keyword>
<keyword id="KW-0217">Developmental protein</keyword>
<keyword id="KW-0903">Direct protein sequencing</keyword>
<keyword id="KW-0325">Glycoprotein</keyword>
<keyword id="KW-0472">Membrane</keyword>
<keyword id="KW-1185">Reference proteome</keyword>
<keyword id="KW-0730">Sialic acid</keyword>
<keyword id="KW-0732">Signal</keyword>
<keyword id="KW-0812">Transmembrane</keyword>
<keyword id="KW-1133">Transmembrane helix</keyword>
<reference key="1">
    <citation type="journal article" date="1990" name="Cell Growth Differ.">
        <title>Isolation of a gene sequence induced later by tumor-promoting 12-O-tetradecanoylphorbol-13-acetate in mouse osteoblastic cells (MC3T3-E1) and expressed constitutively in ras-transformed cells.</title>
        <authorList>
            <person name="Nose K."/>
            <person name="Saito H."/>
            <person name="Kuroki T."/>
        </authorList>
    </citation>
    <scope>NUCLEOTIDE SEQUENCE [MRNA]</scope>
</reference>
<reference key="2">
    <citation type="journal article" date="1992" name="J. Exp. Med.">
        <title>Characterization and cloning of a novel glycoprotein expressed by stromal cells in T-dependent areas of peripheral lymphoid tissues.</title>
        <authorList>
            <person name="Farr A.G."/>
            <person name="Berry M.L."/>
            <person name="Kim A."/>
            <person name="Nelson A.J."/>
            <person name="Welch M.P."/>
            <person name="Aruffo A."/>
        </authorList>
    </citation>
    <scope>NUCLEOTIDE SEQUENCE [MRNA]</scope>
    <source>
        <strain>BALB/cJ</strain>
    </source>
</reference>
<reference key="3">
    <citation type="journal article" date="1999" name="J. Cell Sci.">
        <title>Identification of PA2.26 antigen as a novel cell-surface mucin-type glycoprotein that induces plasma membrane extensions and increased motility in keratinocytes.</title>
        <authorList>
            <person name="Scholl F.G."/>
            <person name="Gamallo C."/>
            <person name="Vilaro S."/>
            <person name="Quintanilla M."/>
        </authorList>
    </citation>
    <scope>NUCLEOTIDE SEQUENCE [MRNA]</scope>
    <scope>PROTEIN SEQUENCE OF 24-30 AND 66-73</scope>
    <scope>FUNCTION</scope>
    <scope>SUBCELLULAR LOCATION</scope>
    <scope>TISSUE SPECIFICITY</scope>
    <scope>GLYCOSYLATION</scope>
</reference>
<reference key="4">
    <citation type="journal article" date="2002" name="Nephrol. Dial. Transplant.">
        <title>Cloning and expression of the mouse glomerular podoplanin homologue gp38P.</title>
        <authorList>
            <person name="Boucherot A."/>
            <person name="Schreiber R."/>
            <person name="Pavenstaedt H."/>
            <person name="Kunzelmann K."/>
        </authorList>
    </citation>
    <scope>NUCLEOTIDE SEQUENCE [MRNA]</scope>
    <scope>FUNCTION</scope>
    <scope>TISSUE SPECIFICITY</scope>
    <scope>INDUCTION</scope>
    <source>
        <tissue>Kidney</tissue>
    </source>
</reference>
<reference key="5">
    <citation type="submission" date="2002-05" db="EMBL/GenBank/DDBJ databases">
        <title>Cloning and characterization studies of mouse E11 gene and its spatial and temporal expression pattern during development.</title>
        <authorList>
            <person name="Lu Y."/>
            <person name="Zhang J."/>
            <person name="Harris M.A."/>
            <person name="Harris S.E."/>
            <person name="Bonewald L."/>
            <person name="Feng J."/>
        </authorList>
    </citation>
    <scope>NUCLEOTIDE SEQUENCE [GENOMIC DNA]</scope>
    <source>
        <strain>129/Sv</strain>
    </source>
</reference>
<reference key="6">
    <citation type="journal article" date="2005" name="Science">
        <title>The transcriptional landscape of the mammalian genome.</title>
        <authorList>
            <person name="Carninci P."/>
            <person name="Kasukawa T."/>
            <person name="Katayama S."/>
            <person name="Gough J."/>
            <person name="Frith M.C."/>
            <person name="Maeda N."/>
            <person name="Oyama R."/>
            <person name="Ravasi T."/>
            <person name="Lenhard B."/>
            <person name="Wells C."/>
            <person name="Kodzius R."/>
            <person name="Shimokawa K."/>
            <person name="Bajic V.B."/>
            <person name="Brenner S.E."/>
            <person name="Batalov S."/>
            <person name="Forrest A.R."/>
            <person name="Zavolan M."/>
            <person name="Davis M.J."/>
            <person name="Wilming L.G."/>
            <person name="Aidinis V."/>
            <person name="Allen J.E."/>
            <person name="Ambesi-Impiombato A."/>
            <person name="Apweiler R."/>
            <person name="Aturaliya R.N."/>
            <person name="Bailey T.L."/>
            <person name="Bansal M."/>
            <person name="Baxter L."/>
            <person name="Beisel K.W."/>
            <person name="Bersano T."/>
            <person name="Bono H."/>
            <person name="Chalk A.M."/>
            <person name="Chiu K.P."/>
            <person name="Choudhary V."/>
            <person name="Christoffels A."/>
            <person name="Clutterbuck D.R."/>
            <person name="Crowe M.L."/>
            <person name="Dalla E."/>
            <person name="Dalrymple B.P."/>
            <person name="de Bono B."/>
            <person name="Della Gatta G."/>
            <person name="di Bernardo D."/>
            <person name="Down T."/>
            <person name="Engstrom P."/>
            <person name="Fagiolini M."/>
            <person name="Faulkner G."/>
            <person name="Fletcher C.F."/>
            <person name="Fukushima T."/>
            <person name="Furuno M."/>
            <person name="Futaki S."/>
            <person name="Gariboldi M."/>
            <person name="Georgii-Hemming P."/>
            <person name="Gingeras T.R."/>
            <person name="Gojobori T."/>
            <person name="Green R.E."/>
            <person name="Gustincich S."/>
            <person name="Harbers M."/>
            <person name="Hayashi Y."/>
            <person name="Hensch T.K."/>
            <person name="Hirokawa N."/>
            <person name="Hill D."/>
            <person name="Huminiecki L."/>
            <person name="Iacono M."/>
            <person name="Ikeo K."/>
            <person name="Iwama A."/>
            <person name="Ishikawa T."/>
            <person name="Jakt M."/>
            <person name="Kanapin A."/>
            <person name="Katoh M."/>
            <person name="Kawasawa Y."/>
            <person name="Kelso J."/>
            <person name="Kitamura H."/>
            <person name="Kitano H."/>
            <person name="Kollias G."/>
            <person name="Krishnan S.P."/>
            <person name="Kruger A."/>
            <person name="Kummerfeld S.K."/>
            <person name="Kurochkin I.V."/>
            <person name="Lareau L.F."/>
            <person name="Lazarevic D."/>
            <person name="Lipovich L."/>
            <person name="Liu J."/>
            <person name="Liuni S."/>
            <person name="McWilliam S."/>
            <person name="Madan Babu M."/>
            <person name="Madera M."/>
            <person name="Marchionni L."/>
            <person name="Matsuda H."/>
            <person name="Matsuzawa S."/>
            <person name="Miki H."/>
            <person name="Mignone F."/>
            <person name="Miyake S."/>
            <person name="Morris K."/>
            <person name="Mottagui-Tabar S."/>
            <person name="Mulder N."/>
            <person name="Nakano N."/>
            <person name="Nakauchi H."/>
            <person name="Ng P."/>
            <person name="Nilsson R."/>
            <person name="Nishiguchi S."/>
            <person name="Nishikawa S."/>
            <person name="Nori F."/>
            <person name="Ohara O."/>
            <person name="Okazaki Y."/>
            <person name="Orlando V."/>
            <person name="Pang K.C."/>
            <person name="Pavan W.J."/>
            <person name="Pavesi G."/>
            <person name="Pesole G."/>
            <person name="Petrovsky N."/>
            <person name="Piazza S."/>
            <person name="Reed J."/>
            <person name="Reid J.F."/>
            <person name="Ring B.Z."/>
            <person name="Ringwald M."/>
            <person name="Rost B."/>
            <person name="Ruan Y."/>
            <person name="Salzberg S.L."/>
            <person name="Sandelin A."/>
            <person name="Schneider C."/>
            <person name="Schoenbach C."/>
            <person name="Sekiguchi K."/>
            <person name="Semple C.A."/>
            <person name="Seno S."/>
            <person name="Sessa L."/>
            <person name="Sheng Y."/>
            <person name="Shibata Y."/>
            <person name="Shimada H."/>
            <person name="Shimada K."/>
            <person name="Silva D."/>
            <person name="Sinclair B."/>
            <person name="Sperling S."/>
            <person name="Stupka E."/>
            <person name="Sugiura K."/>
            <person name="Sultana R."/>
            <person name="Takenaka Y."/>
            <person name="Taki K."/>
            <person name="Tammoja K."/>
            <person name="Tan S.L."/>
            <person name="Tang S."/>
            <person name="Taylor M.S."/>
            <person name="Tegner J."/>
            <person name="Teichmann S.A."/>
            <person name="Ueda H.R."/>
            <person name="van Nimwegen E."/>
            <person name="Verardo R."/>
            <person name="Wei C.L."/>
            <person name="Yagi K."/>
            <person name="Yamanishi H."/>
            <person name="Zabarovsky E."/>
            <person name="Zhu S."/>
            <person name="Zimmer A."/>
            <person name="Hide W."/>
            <person name="Bult C."/>
            <person name="Grimmond S.M."/>
            <person name="Teasdale R.D."/>
            <person name="Liu E.T."/>
            <person name="Brusic V."/>
            <person name="Quackenbush J."/>
            <person name="Wahlestedt C."/>
            <person name="Mattick J.S."/>
            <person name="Hume D.A."/>
            <person name="Kai C."/>
            <person name="Sasaki D."/>
            <person name="Tomaru Y."/>
            <person name="Fukuda S."/>
            <person name="Kanamori-Katayama M."/>
            <person name="Suzuki M."/>
            <person name="Aoki J."/>
            <person name="Arakawa T."/>
            <person name="Iida J."/>
            <person name="Imamura K."/>
            <person name="Itoh M."/>
            <person name="Kato T."/>
            <person name="Kawaji H."/>
            <person name="Kawagashira N."/>
            <person name="Kawashima T."/>
            <person name="Kojima M."/>
            <person name="Kondo S."/>
            <person name="Konno H."/>
            <person name="Nakano K."/>
            <person name="Ninomiya N."/>
            <person name="Nishio T."/>
            <person name="Okada M."/>
            <person name="Plessy C."/>
            <person name="Shibata K."/>
            <person name="Shiraki T."/>
            <person name="Suzuki S."/>
            <person name="Tagami M."/>
            <person name="Waki K."/>
            <person name="Watahiki A."/>
            <person name="Okamura-Oho Y."/>
            <person name="Suzuki H."/>
            <person name="Kawai J."/>
            <person name="Hayashizaki Y."/>
        </authorList>
    </citation>
    <scope>NUCLEOTIDE SEQUENCE [LARGE SCALE MRNA]</scope>
    <source>
        <strain>C57BL/6J</strain>
        <tissue>Visual cortex</tissue>
    </source>
</reference>
<reference key="7">
    <citation type="journal article" date="2009" name="PLoS Biol.">
        <title>Lineage-specific biology revealed by a finished genome assembly of the mouse.</title>
        <authorList>
            <person name="Church D.M."/>
            <person name="Goodstadt L."/>
            <person name="Hillier L.W."/>
            <person name="Zody M.C."/>
            <person name="Goldstein S."/>
            <person name="She X."/>
            <person name="Bult C.J."/>
            <person name="Agarwala R."/>
            <person name="Cherry J.L."/>
            <person name="DiCuccio M."/>
            <person name="Hlavina W."/>
            <person name="Kapustin Y."/>
            <person name="Meric P."/>
            <person name="Maglott D."/>
            <person name="Birtle Z."/>
            <person name="Marques A.C."/>
            <person name="Graves T."/>
            <person name="Zhou S."/>
            <person name="Teague B."/>
            <person name="Potamousis K."/>
            <person name="Churas C."/>
            <person name="Place M."/>
            <person name="Herschleb J."/>
            <person name="Runnheim R."/>
            <person name="Forrest D."/>
            <person name="Amos-Landgraf J."/>
            <person name="Schwartz D.C."/>
            <person name="Cheng Z."/>
            <person name="Lindblad-Toh K."/>
            <person name="Eichler E.E."/>
            <person name="Ponting C.P."/>
        </authorList>
    </citation>
    <scope>NUCLEOTIDE SEQUENCE [LARGE SCALE GENOMIC DNA]</scope>
    <source>
        <strain>C57BL/6J</strain>
    </source>
</reference>
<reference key="8">
    <citation type="journal article" date="2004" name="Genome Res.">
        <title>The status, quality, and expansion of the NIH full-length cDNA project: the Mammalian Gene Collection (MGC).</title>
        <authorList>
            <consortium name="The MGC Project Team"/>
        </authorList>
    </citation>
    <scope>NUCLEOTIDE SEQUENCE [LARGE SCALE MRNA]</scope>
    <source>
        <strain>FVB/N</strain>
        <tissue>Colon</tissue>
    </source>
</reference>
<reference key="9">
    <citation type="journal article" date="2003" name="Dev. Biol.">
        <title>T1alpha, a lung type I cell differentiation gene, is required for normal lung cell proliferation and alveolus formation at birth.</title>
        <authorList>
            <person name="Ramirez M.I."/>
            <person name="Millien G."/>
            <person name="Hinds A."/>
            <person name="Cao Y."/>
            <person name="Seldin D.C."/>
            <person name="Williams M.C."/>
        </authorList>
    </citation>
    <scope>FUNCTION</scope>
    <scope>DISRUPTION PHENOTYPE</scope>
</reference>
<reference key="10">
    <citation type="journal article" date="2003" name="J. Biol. Chem.">
        <title>Molecular identification of aggrus/T1alpha as a platelet aggregation-inducing factor expressed in colorectal tumors.</title>
        <authorList>
            <person name="Kato Y."/>
            <person name="Fujita N."/>
            <person name="Kunita A."/>
            <person name="Sato S."/>
            <person name="Kaneko M."/>
            <person name="Osawa M."/>
            <person name="Tsuruo T."/>
        </authorList>
    </citation>
    <scope>FUNCTION</scope>
    <scope>TISSUE SPECIFICITY</scope>
    <scope>MUTAGENESIS OF THR-34</scope>
</reference>
<reference key="11">
    <citation type="journal article" date="2004" name="J. Biol. Chem.">
        <title>Functional sialylated O-glycan to platelet aggregation on Aggrus (T1alpha/Podoplanin) molecules expressed in Chinese hamster ovary cells.</title>
        <authorList>
            <person name="Kaneko M."/>
            <person name="Kato Y."/>
            <person name="Kunita A."/>
            <person name="Fujita N."/>
            <person name="Tsuruo T."/>
            <person name="Osawa M."/>
        </authorList>
    </citation>
    <scope>FUNCTION</scope>
    <scope>GLYCOSYLATION</scope>
</reference>
<reference key="12">
    <citation type="journal article" date="2007" name="J. Biol. Chem.">
        <title>Involvement of the snake toxin receptor CLEC-2, in podoplanin-mediated platelet activation, by cancer cells.</title>
        <authorList>
            <person name="Suzuki-Inoue K."/>
            <person name="Kato Y."/>
            <person name="Inoue O."/>
            <person name="Kaneko M.K."/>
            <person name="Mishima K."/>
            <person name="Yatomi Y."/>
            <person name="Yamazaki Y."/>
            <person name="Narimatsu H."/>
            <person name="Ozaki Y."/>
        </authorList>
    </citation>
    <scope>FUNCTION</scope>
    <scope>INTERACTION WITH CLEC1B</scope>
</reference>
<reference key="13">
    <citation type="journal article" date="2010" name="Blood">
        <title>Novel function for blood platelets and podoplanin in developmental separation of blood and lymphatic circulation.</title>
        <authorList>
            <person name="Uhrin P."/>
            <person name="Zaujec J."/>
            <person name="Breuss J.M."/>
            <person name="Olcaydu D."/>
            <person name="Chrenek P."/>
            <person name="Stockinger H."/>
            <person name="Fuertbauer E."/>
            <person name="Moser M."/>
            <person name="Haiko P."/>
            <person name="Faessler R."/>
            <person name="Alitalo K."/>
            <person name="Binder B.R."/>
            <person name="Kerjaschki D."/>
        </authorList>
    </citation>
    <scope>DISRUPTION PHENOTYPE</scope>
    <scope>FUNCTION</scope>
    <scope>DEVELOPMENTAL STAGE</scope>
</reference>
<reference key="14">
    <citation type="journal article" date="2010" name="Mol. Biol. Cell">
        <title>Podoplanin associates with CD44 to promote directional cell migration.</title>
        <authorList>
            <person name="Martin-Villar E."/>
            <person name="Fernandez-Munoz B."/>
            <person name="Parsons M."/>
            <person name="Yurrita M.M."/>
            <person name="Megias D."/>
            <person name="Perez-Gomez E."/>
            <person name="Jones G.E."/>
            <person name="Quintanilla M."/>
        </authorList>
    </citation>
    <scope>INDUCTION</scope>
</reference>
<reference key="15">
    <citation type="journal article" date="2013" name="J. Biol. Chem.">
        <title>Serines in the intracellular tail of podoplanin (PDPN) regulate cell motility.</title>
        <authorList>
            <person name="Krishnan H."/>
            <person name="Ochoa-Alvarez J.A."/>
            <person name="Shen Y."/>
            <person name="Nevel E."/>
            <person name="Lakshminarayanan M."/>
            <person name="Williams M.C."/>
            <person name="Ramirez M.I."/>
            <person name="Miller W.T."/>
            <person name="Goldberg G.S."/>
        </authorList>
    </citation>
    <scope>PHOSPHORYLATION</scope>
    <scope>MUTAGENESIS OF SER-167 AND SER-171</scope>
</reference>
<reference key="16">
    <citation type="journal article" date="2015" name="Nat. Immunol.">
        <title>The CLEC-2-podoplanin axis controls the contractility of fibroblastic reticular cells and lymph node microarchitecture.</title>
        <authorList>
            <person name="Astarita J.L."/>
            <person name="Cremasco V."/>
            <person name="Fu J."/>
            <person name="Darnell M.C."/>
            <person name="Peck J.R."/>
            <person name="Nieves-Bonilla J.M."/>
            <person name="Song K."/>
            <person name="Kondo Y."/>
            <person name="Woodruff M.C."/>
            <person name="Gogineni A."/>
            <person name="Onder L."/>
            <person name="Ludewig B."/>
            <person name="Weimer R.M."/>
            <person name="Carroll M.C."/>
            <person name="Mooney D.J."/>
            <person name="Xia L."/>
            <person name="Turley S.J."/>
        </authorList>
    </citation>
    <scope>FUNCTION</scope>
    <scope>DOMAIN</scope>
</reference>
<reference key="17">
    <citation type="journal article" date="2017" name="Circ. Res.">
        <title>Polydom Is an Extracellular Matrix Protein Involved in Lymphatic Vessel Remodeling.</title>
        <authorList>
            <person name="Morooka N."/>
            <person name="Futaki S."/>
            <person name="Sato-Nishiuchi R."/>
            <person name="Nishino M."/>
            <person name="Totani Y."/>
            <person name="Shimono C."/>
            <person name="Nakano I."/>
            <person name="Nakajima H."/>
            <person name="Mochizuki N."/>
            <person name="Sekiguchi K."/>
        </authorList>
    </citation>
    <scope>DEVELOPMENTAL STAGE</scope>
</reference>
<reference key="18">
    <citation type="journal article" date="2010" name="Proc. Natl. Acad. Sci. U.S.A.">
        <title>Antibody recognition of a unique tumor-specific glycopeptide antigen.</title>
        <authorList>
            <person name="Brooks C.L."/>
            <person name="Schietinger A."/>
            <person name="Borisova S.N."/>
            <person name="Kufer P."/>
            <person name="Okon M."/>
            <person name="Hirama T."/>
            <person name="Mackenzie C.R."/>
            <person name="Wang L.X."/>
            <person name="Schreiber H."/>
            <person name="Evans S.V."/>
        </authorList>
    </citation>
    <scope>X-RAY CRYSTALLOGRAPHY (2.2 ANGSTROMS) OF 76-84 IN COMPLEX WITH IMMUNOGLOBULIN</scope>
</reference>
<evidence type="ECO:0000250" key="1">
    <source>
        <dbReference type="UniProtKB" id="Q64294"/>
    </source>
</evidence>
<evidence type="ECO:0000250" key="2">
    <source>
        <dbReference type="UniProtKB" id="Q86YL7"/>
    </source>
</evidence>
<evidence type="ECO:0000255" key="3"/>
<evidence type="ECO:0000256" key="4">
    <source>
        <dbReference type="SAM" id="MobiDB-lite"/>
    </source>
</evidence>
<evidence type="ECO:0000269" key="5">
    <source>
    </source>
</evidence>
<evidence type="ECO:0000269" key="6">
    <source>
    </source>
</evidence>
<evidence type="ECO:0000269" key="7">
    <source>
    </source>
</evidence>
<evidence type="ECO:0000269" key="8">
    <source>
    </source>
</evidence>
<evidence type="ECO:0000269" key="9">
    <source>
    </source>
</evidence>
<evidence type="ECO:0000269" key="10">
    <source>
    </source>
</evidence>
<evidence type="ECO:0000269" key="11">
    <source>
    </source>
</evidence>
<evidence type="ECO:0000269" key="12">
    <source>
    </source>
</evidence>
<evidence type="ECO:0000269" key="13">
    <source>
    </source>
</evidence>
<evidence type="ECO:0000269" key="14">
    <source>
    </source>
</evidence>
<evidence type="ECO:0000269" key="15">
    <source>
    </source>
</evidence>
<evidence type="ECO:0000303" key="16">
    <source>
    </source>
</evidence>
<evidence type="ECO:0000303" key="17">
    <source>
    </source>
</evidence>
<evidence type="ECO:0000303" key="18">
    <source>
    </source>
</evidence>
<evidence type="ECO:0000303" key="19">
    <source ref="5"/>
</evidence>
<evidence type="ECO:0000305" key="20"/>
<evidence type="ECO:0000312" key="21">
    <source>
        <dbReference type="MGI" id="MGI:103098"/>
    </source>
</evidence>
<evidence type="ECO:0007829" key="22">
    <source>
        <dbReference type="PDB" id="3IET"/>
    </source>
</evidence>
<name>PDPN_MOUSE</name>